<organism>
    <name type="scientific">Francisella tularensis subsp. holarctica (strain FTNF002-00 / FTA)</name>
    <dbReference type="NCBI Taxonomy" id="458234"/>
    <lineage>
        <taxon>Bacteria</taxon>
        <taxon>Pseudomonadati</taxon>
        <taxon>Pseudomonadota</taxon>
        <taxon>Gammaproteobacteria</taxon>
        <taxon>Thiotrichales</taxon>
        <taxon>Francisellaceae</taxon>
        <taxon>Francisella</taxon>
    </lineage>
</organism>
<feature type="chain" id="PRO_1000004621" description="Glutamyl-tRNA reductase">
    <location>
        <begin position="1"/>
        <end position="414"/>
    </location>
</feature>
<feature type="active site" description="Nucleophile" evidence="1">
    <location>
        <position position="50"/>
    </location>
</feature>
<feature type="binding site" evidence="1">
    <location>
        <begin position="49"/>
        <end position="52"/>
    </location>
    <ligand>
        <name>substrate</name>
    </ligand>
</feature>
<feature type="binding site" evidence="1">
    <location>
        <position position="108"/>
    </location>
    <ligand>
        <name>substrate</name>
    </ligand>
</feature>
<feature type="binding site" evidence="1">
    <location>
        <begin position="113"/>
        <end position="115"/>
    </location>
    <ligand>
        <name>substrate</name>
    </ligand>
</feature>
<feature type="binding site" evidence="1">
    <location>
        <position position="119"/>
    </location>
    <ligand>
        <name>substrate</name>
    </ligand>
</feature>
<feature type="binding site" evidence="1">
    <location>
        <begin position="188"/>
        <end position="193"/>
    </location>
    <ligand>
        <name>NADP(+)</name>
        <dbReference type="ChEBI" id="CHEBI:58349"/>
    </ligand>
</feature>
<feature type="site" description="Important for activity" evidence="1">
    <location>
        <position position="98"/>
    </location>
</feature>
<comment type="function">
    <text evidence="1">Catalyzes the NADPH-dependent reduction of glutamyl-tRNA(Glu) to glutamate 1-semialdehyde (GSA).</text>
</comment>
<comment type="catalytic activity">
    <reaction evidence="1">
        <text>(S)-4-amino-5-oxopentanoate + tRNA(Glu) + NADP(+) = L-glutamyl-tRNA(Glu) + NADPH + H(+)</text>
        <dbReference type="Rhea" id="RHEA:12344"/>
        <dbReference type="Rhea" id="RHEA-COMP:9663"/>
        <dbReference type="Rhea" id="RHEA-COMP:9680"/>
        <dbReference type="ChEBI" id="CHEBI:15378"/>
        <dbReference type="ChEBI" id="CHEBI:57501"/>
        <dbReference type="ChEBI" id="CHEBI:57783"/>
        <dbReference type="ChEBI" id="CHEBI:58349"/>
        <dbReference type="ChEBI" id="CHEBI:78442"/>
        <dbReference type="ChEBI" id="CHEBI:78520"/>
        <dbReference type="EC" id="1.2.1.70"/>
    </reaction>
</comment>
<comment type="pathway">
    <text evidence="1">Porphyrin-containing compound metabolism; protoporphyrin-IX biosynthesis; 5-aminolevulinate from L-glutamyl-tRNA(Glu): step 1/2.</text>
</comment>
<comment type="subunit">
    <text evidence="1">Homodimer.</text>
</comment>
<comment type="domain">
    <text evidence="1">Possesses an unusual extended V-shaped dimeric structure with each monomer consisting of three distinct domains arranged along a curved 'spinal' alpha-helix. The N-terminal catalytic domain specifically recognizes the glutamate moiety of the substrate. The second domain is the NADPH-binding domain, and the third C-terminal domain is responsible for dimerization.</text>
</comment>
<comment type="miscellaneous">
    <text evidence="1">During catalysis, the active site Cys acts as a nucleophile attacking the alpha-carbonyl group of tRNA-bound glutamate with the formation of a thioester intermediate between enzyme and glutamate, and the concomitant release of tRNA(Glu). The thioester intermediate is finally reduced by direct hydride transfer from NADPH, to form the product GSA.</text>
</comment>
<comment type="similarity">
    <text evidence="1">Belongs to the glutamyl-tRNA reductase family.</text>
</comment>
<comment type="sequence caution" evidence="2">
    <conflict type="erroneous initiation">
        <sequence resource="EMBL-CDS" id="ABU62300"/>
    </conflict>
</comment>
<proteinExistence type="inferred from homology"/>
<protein>
    <recommendedName>
        <fullName evidence="1">Glutamyl-tRNA reductase</fullName>
        <shortName evidence="1">GluTR</shortName>
        <ecNumber evidence="1">1.2.1.70</ecNumber>
    </recommendedName>
</protein>
<evidence type="ECO:0000255" key="1">
    <source>
        <dbReference type="HAMAP-Rule" id="MF_00087"/>
    </source>
</evidence>
<evidence type="ECO:0000305" key="2"/>
<reference key="1">
    <citation type="journal article" date="2009" name="PLoS ONE">
        <title>Complete genome sequence of Francisella tularensis subspecies holarctica FTNF002-00.</title>
        <authorList>
            <person name="Barabote R.D."/>
            <person name="Xie G."/>
            <person name="Brettin T.S."/>
            <person name="Hinrichs S.H."/>
            <person name="Fey P.D."/>
            <person name="Jay J.J."/>
            <person name="Engle J.L."/>
            <person name="Godbole S.D."/>
            <person name="Noronha J.M."/>
            <person name="Scheuermann R.H."/>
            <person name="Zhou L.W."/>
            <person name="Lion C."/>
            <person name="Dempsey M.P."/>
        </authorList>
    </citation>
    <scope>NUCLEOTIDE SEQUENCE [LARGE SCALE GENOMIC DNA]</scope>
    <source>
        <strain>FTNF002-00 / FTA</strain>
    </source>
</reference>
<sequence length="414" mass="46742">MALISLAIDYKKSPIEVRSEFALSGLDVSMLYRSILAIDNVVHAVILSTCNRTEVYLEISDLIVVDDILVWWQGYVRNPNYKIKDYFKLRQGTEVIMHLMKLACGLESMVLGEPQILGQVKDSYTLSKKNHAIGKELDRVFQKVFATAKRVRSETRIGYCPVSVAFSAITLAKRQLDNISSKNVLIIGAGQTGELLFRHVTALAPKQIMLANRTIEKAQKITSVFRNASAHYLSELPQLIKKADIIIAAVNVLEYIVTCKYVGDKPRVFIDISIPQALDPKLGELEQNVYYCVDDINAVIEDNKDKRKYESSKAQKIIVKSLEEYLEKEKAIISNSAIKELFQKADGLVDLSLEKSLAKIRNGKDAEEIIKRFAYEIKKKVLHYPVVGMKEASKQGRSDCLVCMKRMFGLNVEK</sequence>
<gene>
    <name evidence="1" type="primary">hemA</name>
    <name type="ordered locus">FTA_1825</name>
</gene>
<keyword id="KW-0521">NADP</keyword>
<keyword id="KW-0560">Oxidoreductase</keyword>
<keyword id="KW-0627">Porphyrin biosynthesis</keyword>
<accession>A7NE97</accession>
<dbReference type="EC" id="1.2.1.70" evidence="1"/>
<dbReference type="EMBL" id="CP000803">
    <property type="protein sequence ID" value="ABU62300.2"/>
    <property type="status" value="ALT_INIT"/>
    <property type="molecule type" value="Genomic_DNA"/>
</dbReference>
<dbReference type="RefSeq" id="WP_015083880.1">
    <property type="nucleotide sequence ID" value="NC_009749.1"/>
</dbReference>
<dbReference type="SMR" id="A7NE97"/>
<dbReference type="KEGG" id="fta:FTA_1825"/>
<dbReference type="HOGENOM" id="CLU_035113_1_0_6"/>
<dbReference type="UniPathway" id="UPA00251">
    <property type="reaction ID" value="UER00316"/>
</dbReference>
<dbReference type="GO" id="GO:0008883">
    <property type="term" value="F:glutamyl-tRNA reductase activity"/>
    <property type="evidence" value="ECO:0007669"/>
    <property type="project" value="UniProtKB-UniRule"/>
</dbReference>
<dbReference type="GO" id="GO:0050661">
    <property type="term" value="F:NADP binding"/>
    <property type="evidence" value="ECO:0007669"/>
    <property type="project" value="InterPro"/>
</dbReference>
<dbReference type="GO" id="GO:0019353">
    <property type="term" value="P:protoporphyrinogen IX biosynthetic process from glutamate"/>
    <property type="evidence" value="ECO:0007669"/>
    <property type="project" value="TreeGrafter"/>
</dbReference>
<dbReference type="CDD" id="cd05213">
    <property type="entry name" value="NAD_bind_Glutamyl_tRNA_reduct"/>
    <property type="match status" value="1"/>
</dbReference>
<dbReference type="FunFam" id="3.30.460.30:FF:000001">
    <property type="entry name" value="Glutamyl-tRNA reductase"/>
    <property type="match status" value="1"/>
</dbReference>
<dbReference type="Gene3D" id="3.30.460.30">
    <property type="entry name" value="Glutamyl-tRNA reductase, N-terminal domain"/>
    <property type="match status" value="1"/>
</dbReference>
<dbReference type="Gene3D" id="3.40.50.720">
    <property type="entry name" value="NAD(P)-binding Rossmann-like Domain"/>
    <property type="match status" value="1"/>
</dbReference>
<dbReference type="HAMAP" id="MF_00087">
    <property type="entry name" value="Glu_tRNA_reductase"/>
    <property type="match status" value="1"/>
</dbReference>
<dbReference type="InterPro" id="IPR000343">
    <property type="entry name" value="4pyrrol_synth_GluRdtase"/>
</dbReference>
<dbReference type="InterPro" id="IPR015896">
    <property type="entry name" value="4pyrrol_synth_GluRdtase_dimer"/>
</dbReference>
<dbReference type="InterPro" id="IPR015895">
    <property type="entry name" value="4pyrrol_synth_GluRdtase_N"/>
</dbReference>
<dbReference type="InterPro" id="IPR018214">
    <property type="entry name" value="GluRdtase_CS"/>
</dbReference>
<dbReference type="InterPro" id="IPR036453">
    <property type="entry name" value="GluRdtase_dimer_dom_sf"/>
</dbReference>
<dbReference type="InterPro" id="IPR036343">
    <property type="entry name" value="GluRdtase_N_sf"/>
</dbReference>
<dbReference type="InterPro" id="IPR036291">
    <property type="entry name" value="NAD(P)-bd_dom_sf"/>
</dbReference>
<dbReference type="InterPro" id="IPR006151">
    <property type="entry name" value="Shikm_DH/Glu-tRNA_Rdtase"/>
</dbReference>
<dbReference type="NCBIfam" id="TIGR01035">
    <property type="entry name" value="hemA"/>
    <property type="match status" value="1"/>
</dbReference>
<dbReference type="NCBIfam" id="NF010548">
    <property type="entry name" value="PRK13940.1"/>
    <property type="match status" value="1"/>
</dbReference>
<dbReference type="PANTHER" id="PTHR43013">
    <property type="entry name" value="GLUTAMYL-TRNA REDUCTASE"/>
    <property type="match status" value="1"/>
</dbReference>
<dbReference type="PANTHER" id="PTHR43013:SF1">
    <property type="entry name" value="GLUTAMYL-TRNA REDUCTASE"/>
    <property type="match status" value="1"/>
</dbReference>
<dbReference type="Pfam" id="PF00745">
    <property type="entry name" value="GlutR_dimer"/>
    <property type="match status" value="1"/>
</dbReference>
<dbReference type="Pfam" id="PF05201">
    <property type="entry name" value="GlutR_N"/>
    <property type="match status" value="1"/>
</dbReference>
<dbReference type="Pfam" id="PF01488">
    <property type="entry name" value="Shikimate_DH"/>
    <property type="match status" value="1"/>
</dbReference>
<dbReference type="PIRSF" id="PIRSF000445">
    <property type="entry name" value="4pyrrol_synth_GluRdtase"/>
    <property type="match status" value="1"/>
</dbReference>
<dbReference type="SUPFAM" id="SSF69742">
    <property type="entry name" value="Glutamyl tRNA-reductase catalytic, N-terminal domain"/>
    <property type="match status" value="1"/>
</dbReference>
<dbReference type="SUPFAM" id="SSF69075">
    <property type="entry name" value="Glutamyl tRNA-reductase dimerization domain"/>
    <property type="match status" value="1"/>
</dbReference>
<dbReference type="SUPFAM" id="SSF51735">
    <property type="entry name" value="NAD(P)-binding Rossmann-fold domains"/>
    <property type="match status" value="1"/>
</dbReference>
<dbReference type="PROSITE" id="PS00747">
    <property type="entry name" value="GLUTR"/>
    <property type="match status" value="1"/>
</dbReference>
<name>HEM1_FRATF</name>